<evidence type="ECO:0000255" key="1">
    <source>
        <dbReference type="HAMAP-Rule" id="MF_01106"/>
    </source>
</evidence>
<accession>Q9A3Y4</accession>
<keyword id="KW-0012">Acyltransferase</keyword>
<keyword id="KW-0028">Amino-acid biosynthesis</keyword>
<keyword id="KW-0055">Arginine biosynthesis</keyword>
<keyword id="KW-0068">Autocatalytic cleavage</keyword>
<keyword id="KW-0963">Cytoplasm</keyword>
<keyword id="KW-0511">Multifunctional enzyme</keyword>
<keyword id="KW-1185">Reference proteome</keyword>
<keyword id="KW-0808">Transferase</keyword>
<sequence>MPFPTIPPIAGVEIATGRAGFYKHEREDLLLMRFAEGTSAAGVFTRHGVGSAPVDWCKRQLAATGGADVRALVVNAGCANSFTGKPGADAVRRVATAVGKRFDCRQRDVMMASTGVIGVILDDSKITARLPEVESRLKADAWAEAGRAIMTTDTFPKGAYATAVIDGHEVKIAGIAKGSGMIAPDMATMLAFVATDAAIAPAALQTLVSLYTRTTFNCVTVDGDRSTNDTLLLFATGQSGAPKIHRAGDKRLADFREKLEGVLLDLALQLVKDGEGATKFVKITVNGAESPASARKIARTIAESPLVKTAFAGEDANWGRIVMAVGRADEPVAREKISVKFGDLYAARDGLISAEYDEAKMSAYVKNQAFEVSVDVGVGRGSATVWTCDLTKQYVAINGDYRS</sequence>
<comment type="function">
    <text evidence="1">Catalyzes two activities which are involved in the cyclic version of arginine biosynthesis: the synthesis of N-acetylglutamate from glutamate and acetyl-CoA as the acetyl donor, and of ornithine by transacetylation between N(2)-acetylornithine and glutamate.</text>
</comment>
<comment type="catalytic activity">
    <reaction evidence="1">
        <text>N(2)-acetyl-L-ornithine + L-glutamate = N-acetyl-L-glutamate + L-ornithine</text>
        <dbReference type="Rhea" id="RHEA:15349"/>
        <dbReference type="ChEBI" id="CHEBI:29985"/>
        <dbReference type="ChEBI" id="CHEBI:44337"/>
        <dbReference type="ChEBI" id="CHEBI:46911"/>
        <dbReference type="ChEBI" id="CHEBI:57805"/>
        <dbReference type="EC" id="2.3.1.35"/>
    </reaction>
</comment>
<comment type="catalytic activity">
    <reaction evidence="1">
        <text>L-glutamate + acetyl-CoA = N-acetyl-L-glutamate + CoA + H(+)</text>
        <dbReference type="Rhea" id="RHEA:24292"/>
        <dbReference type="ChEBI" id="CHEBI:15378"/>
        <dbReference type="ChEBI" id="CHEBI:29985"/>
        <dbReference type="ChEBI" id="CHEBI:44337"/>
        <dbReference type="ChEBI" id="CHEBI:57287"/>
        <dbReference type="ChEBI" id="CHEBI:57288"/>
        <dbReference type="EC" id="2.3.1.1"/>
    </reaction>
</comment>
<comment type="pathway">
    <text evidence="1">Amino-acid biosynthesis; L-arginine biosynthesis; L-ornithine and N-acetyl-L-glutamate from L-glutamate and N(2)-acetyl-L-ornithine (cyclic): step 1/1.</text>
</comment>
<comment type="pathway">
    <text evidence="1">Amino-acid biosynthesis; L-arginine biosynthesis; N(2)-acetyl-L-ornithine from L-glutamate: step 1/4.</text>
</comment>
<comment type="subunit">
    <text evidence="1">Heterotetramer of two alpha and two beta chains.</text>
</comment>
<comment type="subcellular location">
    <subcellularLocation>
        <location evidence="1">Cytoplasm</location>
    </subcellularLocation>
</comment>
<comment type="similarity">
    <text evidence="1">Belongs to the ArgJ family.</text>
</comment>
<organism>
    <name type="scientific">Caulobacter vibrioides (strain ATCC 19089 / CIP 103742 / CB 15)</name>
    <name type="common">Caulobacter crescentus</name>
    <dbReference type="NCBI Taxonomy" id="190650"/>
    <lineage>
        <taxon>Bacteria</taxon>
        <taxon>Pseudomonadati</taxon>
        <taxon>Pseudomonadota</taxon>
        <taxon>Alphaproteobacteria</taxon>
        <taxon>Caulobacterales</taxon>
        <taxon>Caulobacteraceae</taxon>
        <taxon>Caulobacter</taxon>
    </lineage>
</organism>
<reference key="1">
    <citation type="journal article" date="2001" name="Proc. Natl. Acad. Sci. U.S.A.">
        <title>Complete genome sequence of Caulobacter crescentus.</title>
        <authorList>
            <person name="Nierman W.C."/>
            <person name="Feldblyum T.V."/>
            <person name="Laub M.T."/>
            <person name="Paulsen I.T."/>
            <person name="Nelson K.E."/>
            <person name="Eisen J.A."/>
            <person name="Heidelberg J.F."/>
            <person name="Alley M.R.K."/>
            <person name="Ohta N."/>
            <person name="Maddock J.R."/>
            <person name="Potocka I."/>
            <person name="Nelson W.C."/>
            <person name="Newton A."/>
            <person name="Stephens C."/>
            <person name="Phadke N.D."/>
            <person name="Ely B."/>
            <person name="DeBoy R.T."/>
            <person name="Dodson R.J."/>
            <person name="Durkin A.S."/>
            <person name="Gwinn M.L."/>
            <person name="Haft D.H."/>
            <person name="Kolonay J.F."/>
            <person name="Smit J."/>
            <person name="Craven M.B."/>
            <person name="Khouri H.M."/>
            <person name="Shetty J."/>
            <person name="Berry K.J."/>
            <person name="Utterback T.R."/>
            <person name="Tran K."/>
            <person name="Wolf A.M."/>
            <person name="Vamathevan J.J."/>
            <person name="Ermolaeva M.D."/>
            <person name="White O."/>
            <person name="Salzberg S.L."/>
            <person name="Venter J.C."/>
            <person name="Shapiro L."/>
            <person name="Fraser C.M."/>
        </authorList>
    </citation>
    <scope>NUCLEOTIDE SEQUENCE [LARGE SCALE GENOMIC DNA]</scope>
    <source>
        <strain>ATCC 19089 / CIP 103742 / CB 15</strain>
    </source>
</reference>
<dbReference type="EC" id="2.3.1.35" evidence="1"/>
<dbReference type="EC" id="2.3.1.1" evidence="1"/>
<dbReference type="EMBL" id="AE005673">
    <property type="protein sequence ID" value="AAK25028.1"/>
    <property type="molecule type" value="Genomic_DNA"/>
</dbReference>
<dbReference type="PIR" id="H87628">
    <property type="entry name" value="H87628"/>
</dbReference>
<dbReference type="RefSeq" id="NP_421860.1">
    <property type="nucleotide sequence ID" value="NC_002696.2"/>
</dbReference>
<dbReference type="SMR" id="Q9A3Y4"/>
<dbReference type="STRING" id="190650.CC_3066"/>
<dbReference type="MEROPS" id="T05.001"/>
<dbReference type="EnsemblBacteria" id="AAK25028">
    <property type="protein sequence ID" value="AAK25028"/>
    <property type="gene ID" value="CC_3066"/>
</dbReference>
<dbReference type="KEGG" id="ccr:CC_3066"/>
<dbReference type="PATRIC" id="fig|190650.5.peg.3071"/>
<dbReference type="eggNOG" id="COG1364">
    <property type="taxonomic scope" value="Bacteria"/>
</dbReference>
<dbReference type="HOGENOM" id="CLU_027172_1_0_5"/>
<dbReference type="BioCyc" id="CAULO:CC3066-MONOMER"/>
<dbReference type="UniPathway" id="UPA00068">
    <property type="reaction ID" value="UER00106"/>
</dbReference>
<dbReference type="UniPathway" id="UPA00068">
    <property type="reaction ID" value="UER00111"/>
</dbReference>
<dbReference type="Proteomes" id="UP000001816">
    <property type="component" value="Chromosome"/>
</dbReference>
<dbReference type="GO" id="GO:0005737">
    <property type="term" value="C:cytoplasm"/>
    <property type="evidence" value="ECO:0007669"/>
    <property type="project" value="UniProtKB-SubCell"/>
</dbReference>
<dbReference type="GO" id="GO:0004358">
    <property type="term" value="F:glutamate N-acetyltransferase activity"/>
    <property type="evidence" value="ECO:0007669"/>
    <property type="project" value="UniProtKB-UniRule"/>
</dbReference>
<dbReference type="GO" id="GO:0004042">
    <property type="term" value="F:L-glutamate N-acetyltransferase activity"/>
    <property type="evidence" value="ECO:0007669"/>
    <property type="project" value="UniProtKB-UniRule"/>
</dbReference>
<dbReference type="GO" id="GO:0006526">
    <property type="term" value="P:L-arginine biosynthetic process"/>
    <property type="evidence" value="ECO:0007669"/>
    <property type="project" value="UniProtKB-UniRule"/>
</dbReference>
<dbReference type="GO" id="GO:0006592">
    <property type="term" value="P:ornithine biosynthetic process"/>
    <property type="evidence" value="ECO:0007669"/>
    <property type="project" value="TreeGrafter"/>
</dbReference>
<dbReference type="CDD" id="cd02152">
    <property type="entry name" value="OAT"/>
    <property type="match status" value="1"/>
</dbReference>
<dbReference type="FunFam" id="3.10.20.340:FF:000003">
    <property type="entry name" value="Arginine biosynthesis bifunctional protein ArgJ"/>
    <property type="match status" value="1"/>
</dbReference>
<dbReference type="FunFam" id="3.60.70.12:FF:000001">
    <property type="entry name" value="Arginine biosynthesis bifunctional protein ArgJ, chloroplastic"/>
    <property type="match status" value="1"/>
</dbReference>
<dbReference type="Gene3D" id="3.10.20.340">
    <property type="entry name" value="ArgJ beta chain, C-terminal domain"/>
    <property type="match status" value="1"/>
</dbReference>
<dbReference type="Gene3D" id="3.60.70.12">
    <property type="entry name" value="L-amino peptidase D-ALA esterase/amidase"/>
    <property type="match status" value="1"/>
</dbReference>
<dbReference type="HAMAP" id="MF_01106">
    <property type="entry name" value="ArgJ"/>
    <property type="match status" value="1"/>
</dbReference>
<dbReference type="InterPro" id="IPR002813">
    <property type="entry name" value="Arg_biosynth_ArgJ"/>
</dbReference>
<dbReference type="InterPro" id="IPR016117">
    <property type="entry name" value="ArgJ-like_dom_sf"/>
</dbReference>
<dbReference type="InterPro" id="IPR042195">
    <property type="entry name" value="ArgJ_beta_C"/>
</dbReference>
<dbReference type="NCBIfam" id="TIGR00120">
    <property type="entry name" value="ArgJ"/>
    <property type="match status" value="1"/>
</dbReference>
<dbReference type="NCBIfam" id="NF003802">
    <property type="entry name" value="PRK05388.1"/>
    <property type="match status" value="1"/>
</dbReference>
<dbReference type="PANTHER" id="PTHR23100">
    <property type="entry name" value="ARGININE BIOSYNTHESIS BIFUNCTIONAL PROTEIN ARGJ"/>
    <property type="match status" value="1"/>
</dbReference>
<dbReference type="PANTHER" id="PTHR23100:SF0">
    <property type="entry name" value="ARGININE BIOSYNTHESIS BIFUNCTIONAL PROTEIN ARGJ, MITOCHONDRIAL"/>
    <property type="match status" value="1"/>
</dbReference>
<dbReference type="Pfam" id="PF01960">
    <property type="entry name" value="ArgJ"/>
    <property type="match status" value="1"/>
</dbReference>
<dbReference type="SUPFAM" id="SSF56266">
    <property type="entry name" value="DmpA/ArgJ-like"/>
    <property type="match status" value="1"/>
</dbReference>
<feature type="chain" id="PRO_0000002145" description="Arginine biosynthesis bifunctional protein ArgJ alpha chain" evidence="1">
    <location>
        <begin position="1"/>
        <end position="187"/>
    </location>
</feature>
<feature type="chain" id="PRO_0000002146" description="Arginine biosynthesis bifunctional protein ArgJ beta chain" evidence="1">
    <location>
        <begin position="188"/>
        <end position="403"/>
    </location>
</feature>
<feature type="active site" description="Nucleophile" evidence="1">
    <location>
        <position position="188"/>
    </location>
</feature>
<feature type="binding site" evidence="1">
    <location>
        <position position="151"/>
    </location>
    <ligand>
        <name>substrate</name>
    </ligand>
</feature>
<feature type="binding site" evidence="1">
    <location>
        <position position="177"/>
    </location>
    <ligand>
        <name>substrate</name>
    </ligand>
</feature>
<feature type="binding site" evidence="1">
    <location>
        <position position="188"/>
    </location>
    <ligand>
        <name>substrate</name>
    </ligand>
</feature>
<feature type="binding site" evidence="1">
    <location>
        <position position="275"/>
    </location>
    <ligand>
        <name>substrate</name>
    </ligand>
</feature>
<feature type="binding site" evidence="1">
    <location>
        <position position="398"/>
    </location>
    <ligand>
        <name>substrate</name>
    </ligand>
</feature>
<feature type="binding site" evidence="1">
    <location>
        <position position="403"/>
    </location>
    <ligand>
        <name>substrate</name>
    </ligand>
</feature>
<feature type="site" description="Involved in the stabilization of negative charge on the oxyanion by the formation of the oxyanion hole" evidence="1">
    <location>
        <position position="114"/>
    </location>
</feature>
<feature type="site" description="Involved in the stabilization of negative charge on the oxyanion by the formation of the oxyanion hole" evidence="1">
    <location>
        <position position="115"/>
    </location>
</feature>
<feature type="site" description="Cleavage; by autolysis" evidence="1">
    <location>
        <begin position="187"/>
        <end position="188"/>
    </location>
</feature>
<gene>
    <name evidence="1" type="primary">argJ</name>
    <name type="ordered locus">CC_3066</name>
</gene>
<proteinExistence type="inferred from homology"/>
<name>ARGJ_CAUVC</name>
<protein>
    <recommendedName>
        <fullName evidence="1">Arginine biosynthesis bifunctional protein ArgJ</fullName>
    </recommendedName>
    <domain>
        <recommendedName>
            <fullName evidence="1">Glutamate N-acetyltransferase</fullName>
            <ecNumber evidence="1">2.3.1.35</ecNumber>
        </recommendedName>
        <alternativeName>
            <fullName evidence="1">Ornithine acetyltransferase</fullName>
            <shortName evidence="1">OATase</shortName>
        </alternativeName>
        <alternativeName>
            <fullName evidence="1">Ornithine transacetylase</fullName>
        </alternativeName>
    </domain>
    <domain>
        <recommendedName>
            <fullName evidence="1">Amino-acid acetyltransferase</fullName>
            <ecNumber evidence="1">2.3.1.1</ecNumber>
        </recommendedName>
        <alternativeName>
            <fullName evidence="1">N-acetylglutamate synthase</fullName>
            <shortName evidence="1">AGSase</shortName>
        </alternativeName>
    </domain>
    <component>
        <recommendedName>
            <fullName evidence="1">Arginine biosynthesis bifunctional protein ArgJ alpha chain</fullName>
        </recommendedName>
    </component>
    <component>
        <recommendedName>
            <fullName evidence="1">Arginine biosynthesis bifunctional protein ArgJ beta chain</fullName>
        </recommendedName>
    </component>
</protein>